<reference key="1">
    <citation type="submission" date="2008-08" db="EMBL/GenBank/DDBJ databases">
        <title>Complete sequence of Vibrio fischeri strain MJ11.</title>
        <authorList>
            <person name="Mandel M.J."/>
            <person name="Stabb E.V."/>
            <person name="Ruby E.G."/>
            <person name="Ferriera S."/>
            <person name="Johnson J."/>
            <person name="Kravitz S."/>
            <person name="Beeson K."/>
            <person name="Sutton G."/>
            <person name="Rogers Y.-H."/>
            <person name="Friedman R."/>
            <person name="Frazier M."/>
            <person name="Venter J.C."/>
        </authorList>
    </citation>
    <scope>NUCLEOTIDE SEQUENCE [LARGE SCALE GENOMIC DNA]</scope>
    <source>
        <strain>MJ11</strain>
    </source>
</reference>
<name>MGSA_ALIFM</name>
<dbReference type="EC" id="4.2.3.3" evidence="1"/>
<dbReference type="EMBL" id="CP001139">
    <property type="protein sequence ID" value="ACH66866.1"/>
    <property type="molecule type" value="Genomic_DNA"/>
</dbReference>
<dbReference type="RefSeq" id="WP_012534035.1">
    <property type="nucleotide sequence ID" value="NC_011184.1"/>
</dbReference>
<dbReference type="SMR" id="B5FF54"/>
<dbReference type="KEGG" id="vfm:VFMJ11_1735"/>
<dbReference type="HOGENOM" id="CLU_120420_0_1_6"/>
<dbReference type="Proteomes" id="UP000001857">
    <property type="component" value="Chromosome I"/>
</dbReference>
<dbReference type="GO" id="GO:0005829">
    <property type="term" value="C:cytosol"/>
    <property type="evidence" value="ECO:0007669"/>
    <property type="project" value="TreeGrafter"/>
</dbReference>
<dbReference type="GO" id="GO:0008929">
    <property type="term" value="F:methylglyoxal synthase activity"/>
    <property type="evidence" value="ECO:0007669"/>
    <property type="project" value="UniProtKB-UniRule"/>
</dbReference>
<dbReference type="GO" id="GO:0019242">
    <property type="term" value="P:methylglyoxal biosynthetic process"/>
    <property type="evidence" value="ECO:0007669"/>
    <property type="project" value="UniProtKB-UniRule"/>
</dbReference>
<dbReference type="CDD" id="cd01422">
    <property type="entry name" value="MGS"/>
    <property type="match status" value="1"/>
</dbReference>
<dbReference type="FunFam" id="3.40.50.1380:FF:000002">
    <property type="entry name" value="Methylglyoxal synthase"/>
    <property type="match status" value="1"/>
</dbReference>
<dbReference type="Gene3D" id="3.40.50.1380">
    <property type="entry name" value="Methylglyoxal synthase-like domain"/>
    <property type="match status" value="1"/>
</dbReference>
<dbReference type="HAMAP" id="MF_00549">
    <property type="entry name" value="Methylglyoxal_synth"/>
    <property type="match status" value="1"/>
</dbReference>
<dbReference type="InterPro" id="IPR004363">
    <property type="entry name" value="Methylgl_synth"/>
</dbReference>
<dbReference type="InterPro" id="IPR018148">
    <property type="entry name" value="Methylglyoxal_synth_AS"/>
</dbReference>
<dbReference type="InterPro" id="IPR011607">
    <property type="entry name" value="MGS-like_dom"/>
</dbReference>
<dbReference type="InterPro" id="IPR036914">
    <property type="entry name" value="MGS-like_dom_sf"/>
</dbReference>
<dbReference type="NCBIfam" id="TIGR00160">
    <property type="entry name" value="MGSA"/>
    <property type="match status" value="1"/>
</dbReference>
<dbReference type="NCBIfam" id="NF003559">
    <property type="entry name" value="PRK05234.1"/>
    <property type="match status" value="1"/>
</dbReference>
<dbReference type="PANTHER" id="PTHR30492">
    <property type="entry name" value="METHYLGLYOXAL SYNTHASE"/>
    <property type="match status" value="1"/>
</dbReference>
<dbReference type="PANTHER" id="PTHR30492:SF0">
    <property type="entry name" value="METHYLGLYOXAL SYNTHASE"/>
    <property type="match status" value="1"/>
</dbReference>
<dbReference type="Pfam" id="PF02142">
    <property type="entry name" value="MGS"/>
    <property type="match status" value="1"/>
</dbReference>
<dbReference type="PIRSF" id="PIRSF006614">
    <property type="entry name" value="Methylglyox_syn"/>
    <property type="match status" value="1"/>
</dbReference>
<dbReference type="SMART" id="SM00851">
    <property type="entry name" value="MGS"/>
    <property type="match status" value="1"/>
</dbReference>
<dbReference type="SUPFAM" id="SSF52335">
    <property type="entry name" value="Methylglyoxal synthase-like"/>
    <property type="match status" value="1"/>
</dbReference>
<dbReference type="PROSITE" id="PS01335">
    <property type="entry name" value="METHYLGLYOXAL_SYNTH"/>
    <property type="match status" value="1"/>
</dbReference>
<dbReference type="PROSITE" id="PS51855">
    <property type="entry name" value="MGS"/>
    <property type="match status" value="1"/>
</dbReference>
<comment type="function">
    <text evidence="1">Catalyzes the formation of methylglyoxal from dihydroxyacetone phosphate.</text>
</comment>
<comment type="catalytic activity">
    <reaction evidence="1">
        <text>dihydroxyacetone phosphate = methylglyoxal + phosphate</text>
        <dbReference type="Rhea" id="RHEA:17937"/>
        <dbReference type="ChEBI" id="CHEBI:17158"/>
        <dbReference type="ChEBI" id="CHEBI:43474"/>
        <dbReference type="ChEBI" id="CHEBI:57642"/>
        <dbReference type="EC" id="4.2.3.3"/>
    </reaction>
</comment>
<comment type="similarity">
    <text evidence="1">Belongs to the methylglyoxal synthase family.</text>
</comment>
<gene>
    <name evidence="1" type="primary">mgsA</name>
    <name type="ordered locus">VFMJ11_1735</name>
</gene>
<evidence type="ECO:0000255" key="1">
    <source>
        <dbReference type="HAMAP-Rule" id="MF_00549"/>
    </source>
</evidence>
<sequence>MNKTTRVMPAHKHIALVAHDNYKPELLRWVKENKDALQGHFLYATGTTGRILSKETGLAIKSLLSGPMGGDQQLGALISEGKIDMMIFFWDPLNAVPHDPDVKALLRIATVWNVPVAMNRASAKFMISAPQMAEEVSIEIPDYDAYLAERV</sequence>
<organism>
    <name type="scientific">Aliivibrio fischeri (strain MJ11)</name>
    <name type="common">Vibrio fischeri</name>
    <dbReference type="NCBI Taxonomy" id="388396"/>
    <lineage>
        <taxon>Bacteria</taxon>
        <taxon>Pseudomonadati</taxon>
        <taxon>Pseudomonadota</taxon>
        <taxon>Gammaproteobacteria</taxon>
        <taxon>Vibrionales</taxon>
        <taxon>Vibrionaceae</taxon>
        <taxon>Aliivibrio</taxon>
    </lineage>
</organism>
<protein>
    <recommendedName>
        <fullName evidence="1">Methylglyoxal synthase</fullName>
        <shortName evidence="1">MGS</shortName>
        <ecNumber evidence="1">4.2.3.3</ecNumber>
    </recommendedName>
</protein>
<keyword id="KW-0456">Lyase</keyword>
<accession>B5FF54</accession>
<feature type="chain" id="PRO_1000129013" description="Methylglyoxal synthase">
    <location>
        <begin position="1"/>
        <end position="151"/>
    </location>
</feature>
<feature type="domain" description="MGS-like" evidence="1">
    <location>
        <begin position="6"/>
        <end position="151"/>
    </location>
</feature>
<feature type="active site" description="Proton donor/acceptor" evidence="1">
    <location>
        <position position="71"/>
    </location>
</feature>
<feature type="binding site" evidence="1">
    <location>
        <position position="19"/>
    </location>
    <ligand>
        <name>substrate</name>
    </ligand>
</feature>
<feature type="binding site" evidence="1">
    <location>
        <position position="23"/>
    </location>
    <ligand>
        <name>substrate</name>
    </ligand>
</feature>
<feature type="binding site" evidence="1">
    <location>
        <begin position="45"/>
        <end position="48"/>
    </location>
    <ligand>
        <name>substrate</name>
    </ligand>
</feature>
<feature type="binding site" evidence="1">
    <location>
        <begin position="65"/>
        <end position="66"/>
    </location>
    <ligand>
        <name>substrate</name>
    </ligand>
</feature>
<feature type="binding site" evidence="1">
    <location>
        <position position="98"/>
    </location>
    <ligand>
        <name>substrate</name>
    </ligand>
</feature>
<proteinExistence type="inferred from homology"/>